<protein>
    <recommendedName>
        <fullName evidence="6">DENN domain-containing protein 10</fullName>
    </recommendedName>
    <alternativeName>
        <fullName>Protein FAM45A</fullName>
    </alternativeName>
</protein>
<gene>
    <name evidence="7" type="primary">DENND10</name>
    <name evidence="7" type="synonym">FAM45A</name>
</gene>
<organism>
    <name type="scientific">Homo sapiens</name>
    <name type="common">Human</name>
    <dbReference type="NCBI Taxonomy" id="9606"/>
    <lineage>
        <taxon>Eukaryota</taxon>
        <taxon>Metazoa</taxon>
        <taxon>Chordata</taxon>
        <taxon>Craniata</taxon>
        <taxon>Vertebrata</taxon>
        <taxon>Euteleostomi</taxon>
        <taxon>Mammalia</taxon>
        <taxon>Eutheria</taxon>
        <taxon>Euarchontoglires</taxon>
        <taxon>Primates</taxon>
        <taxon>Haplorrhini</taxon>
        <taxon>Catarrhini</taxon>
        <taxon>Hominidae</taxon>
        <taxon>Homo</taxon>
    </lineage>
</organism>
<accession>Q8TCE6</accession>
<accession>B1AMV6</accession>
<accession>B4DDC3</accession>
<accession>D3DRC8</accession>
<accession>Q9NXW4</accession>
<name>DEN10_HUMAN</name>
<evidence type="ECO:0000255" key="1">
    <source>
        <dbReference type="PROSITE-ProRule" id="PRU00304"/>
    </source>
</evidence>
<evidence type="ECO:0000269" key="2">
    <source>
    </source>
</evidence>
<evidence type="ECO:0000269" key="3">
    <source>
    </source>
</evidence>
<evidence type="ECO:0000269" key="4">
    <source>
    </source>
</evidence>
<evidence type="ECO:0000303" key="5">
    <source>
    </source>
</evidence>
<evidence type="ECO:0000305" key="6"/>
<evidence type="ECO:0000312" key="7">
    <source>
        <dbReference type="HGNC" id="HGNC:31793"/>
    </source>
</evidence>
<evidence type="ECO:0007744" key="8">
    <source>
        <dbReference type="PDB" id="8P0V"/>
    </source>
</evidence>
<proteinExistence type="evidence at protein level"/>
<feature type="chain" id="PRO_0000187034" description="DENN domain-containing protein 10">
    <location>
        <begin position="1"/>
        <end position="357"/>
    </location>
</feature>
<feature type="domain" description="uDENN" evidence="1">
    <location>
        <begin position="1"/>
        <end position="140"/>
    </location>
</feature>
<feature type="domain" description="cDENN" evidence="1">
    <location>
        <begin position="165"/>
        <end position="299"/>
    </location>
</feature>
<feature type="domain" description="dDENN" evidence="1">
    <location>
        <begin position="301"/>
        <end position="357"/>
    </location>
</feature>
<feature type="splice variant" id="VSP_038301" description="In isoform 2." evidence="5">
    <original>MAAAEVADTQLMLGVGLI</original>
    <variation>MLSSDHLSTV</variation>
    <location>
        <begin position="1"/>
        <end position="18"/>
    </location>
</feature>
<feature type="mutagenesis site" description="Impairs interaction with CCDC93." evidence="3">
    <original>L</original>
    <variation>E</variation>
    <location>
        <position position="27"/>
    </location>
</feature>
<feature type="mutagenesis site" description="Impairs interaction with CCDC93." evidence="3">
    <original>M</original>
    <variation>E</variation>
    <location>
        <position position="123"/>
    </location>
</feature>
<feature type="mutagenesis site" description="Impairs interaction with CCDC93." evidence="3">
    <original>I</original>
    <variation>E</variation>
    <location>
        <position position="127"/>
    </location>
</feature>
<feature type="sequence conflict" description="In Ref. 1; BAA90894." evidence="6" ref="1">
    <original>K</original>
    <variation>R</variation>
    <location>
        <position position="267"/>
    </location>
</feature>
<sequence length="357" mass="40513">MAAAEVADTQLMLGVGLIEKDTNGEVLWVWCYPSTTATLRNLLLRKCCLTDENKLLHPFVFGQYRRTWFYITTIEVPDSSILKKVTHFSIVLTAKDFNPEKYAAFTRILCRMYLKHGSPVKMMESYIAVLTKGICQSEENGSFLSKDFDARKAYLAGSIKDIVSQFGMETVILHTALMLKKRIVVYHPKIEAVQEFTRTLPALVWHRQDWTILHSYVHLNADELEALQMCTGYVAGFVDLEVSNRPDLYDVFVNLAESEITIAPLAKEAMAMGKLHKEMGQLIVQSAEDPEKSESHVIQDIALKTREIFTNLAPFSEVSADGEKRVLNLEALKQKRFPPATENFLYHLAAAEQMLKI</sequence>
<comment type="function">
    <text evidence="2 4">Guanine nucleotide exchange factor (GEF) regulating homeostasis of late endocytic pathway, including endosomal positioning, maturation and secretion, possibly through activating Rab proteins such as RAB27A and RAB27B (PubMed:38459129). Promotes the exchange of GDP to GTP, converting inactive GDP-bound RAB27A and RAB27B into their active GTP-bound form (PubMed:30771381, PubMed:38459129).</text>
</comment>
<comment type="subunit">
    <text evidence="2 3 4">Interacts with the coiled-coil heterodimer of CCDC22 and CCDC93; the interaction is direct (PubMed:37172566, PubMed:38459129). Interacts with RAB27A and RAB27B (GDP-bound forms preferentially) (PubMed:30771381).</text>
</comment>
<comment type="interaction">
    <interactant intactId="EBI-725416">
        <id>Q8TCE6</id>
    </interactant>
    <interactant intactId="EBI-1104769">
        <id>Q567U6</id>
        <label>CCDC93</label>
    </interactant>
    <organismsDiffer>false</organismsDiffer>
    <experiments>6</experiments>
</comment>
<comment type="subcellular location">
    <subcellularLocation>
        <location evidence="2">Late endosome</location>
    </subcellularLocation>
</comment>
<comment type="alternative products">
    <event type="alternative splicing"/>
    <isoform>
        <id>Q8TCE6-1</id>
        <name>1</name>
        <sequence type="displayed"/>
    </isoform>
    <isoform>
        <id>Q8TCE6-2</id>
        <name>2</name>
        <sequence type="described" ref="VSP_038301"/>
    </isoform>
</comment>
<comment type="similarity">
    <text evidence="6">Belongs to the DENND10 family.</text>
</comment>
<dbReference type="EMBL" id="AK000031">
    <property type="protein sequence ID" value="BAA90894.1"/>
    <property type="molecule type" value="mRNA"/>
</dbReference>
<dbReference type="EMBL" id="AK293136">
    <property type="protein sequence ID" value="BAG56684.1"/>
    <property type="molecule type" value="mRNA"/>
</dbReference>
<dbReference type="EMBL" id="AL355598">
    <property type="status" value="NOT_ANNOTATED_CDS"/>
    <property type="molecule type" value="Genomic_DNA"/>
</dbReference>
<dbReference type="EMBL" id="CH471066">
    <property type="protein sequence ID" value="EAW49406.1"/>
    <property type="molecule type" value="Genomic_DNA"/>
</dbReference>
<dbReference type="EMBL" id="CH471066">
    <property type="protein sequence ID" value="EAW49407.1"/>
    <property type="molecule type" value="Genomic_DNA"/>
</dbReference>
<dbReference type="EMBL" id="BC022271">
    <property type="protein sequence ID" value="AAH22271.1"/>
    <property type="molecule type" value="mRNA"/>
</dbReference>
<dbReference type="CCDS" id="CCDS7609.1">
    <molecule id="Q8TCE6-1"/>
</dbReference>
<dbReference type="RefSeq" id="NP_001290040.1">
    <molecule id="Q8TCE6-2"/>
    <property type="nucleotide sequence ID" value="NM_001303111.2"/>
</dbReference>
<dbReference type="RefSeq" id="NP_001290041.1">
    <property type="nucleotide sequence ID" value="NM_001303112.1"/>
</dbReference>
<dbReference type="RefSeq" id="NP_001290042.1">
    <property type="nucleotide sequence ID" value="NM_001303113.1"/>
</dbReference>
<dbReference type="RefSeq" id="NP_996892.1">
    <molecule id="Q8TCE6-1"/>
    <property type="nucleotide sequence ID" value="NM_207009.4"/>
</dbReference>
<dbReference type="RefSeq" id="XP_016871750.1">
    <property type="nucleotide sequence ID" value="XM_017016261.1"/>
</dbReference>
<dbReference type="RefSeq" id="XP_016871751.1">
    <property type="nucleotide sequence ID" value="XM_017016262.1"/>
</dbReference>
<dbReference type="RefSeq" id="XP_016871752.1">
    <property type="nucleotide sequence ID" value="XM_017016263.1"/>
</dbReference>
<dbReference type="RefSeq" id="XP_047281205.1">
    <molecule id="Q8TCE6-2"/>
    <property type="nucleotide sequence ID" value="XM_047425249.1"/>
</dbReference>
<dbReference type="RefSeq" id="XP_054221918.1">
    <molecule id="Q8TCE6-2"/>
    <property type="nucleotide sequence ID" value="XM_054365943.1"/>
</dbReference>
<dbReference type="PDB" id="8P0V">
    <property type="method" value="EM"/>
    <property type="resolution" value="6.50 A"/>
    <property type="chains" value="M=1-357"/>
</dbReference>
<dbReference type="PDBsum" id="8P0V"/>
<dbReference type="EMDB" id="EMD-17339"/>
<dbReference type="EMDB" id="EMD-17342"/>
<dbReference type="SMR" id="Q8TCE6"/>
<dbReference type="BioGRID" id="135667">
    <property type="interactions" value="36"/>
</dbReference>
<dbReference type="ComplexPortal" id="CPX-2211">
    <property type="entry name" value="Commander complex"/>
</dbReference>
<dbReference type="FunCoup" id="Q8TCE6">
    <property type="interactions" value="879"/>
</dbReference>
<dbReference type="IntAct" id="Q8TCE6">
    <property type="interactions" value="34"/>
</dbReference>
<dbReference type="MINT" id="Q8TCE6"/>
<dbReference type="STRING" id="9606.ENSP00000354688"/>
<dbReference type="iPTMnet" id="Q8TCE6"/>
<dbReference type="PhosphoSitePlus" id="Q8TCE6"/>
<dbReference type="BioMuta" id="FAM45A"/>
<dbReference type="DMDM" id="51316043"/>
<dbReference type="jPOST" id="Q8TCE6"/>
<dbReference type="MassIVE" id="Q8TCE6"/>
<dbReference type="PaxDb" id="9606-ENSP00000354688"/>
<dbReference type="PeptideAtlas" id="Q8TCE6"/>
<dbReference type="ProteomicsDB" id="74125">
    <molecule id="Q8TCE6-1"/>
</dbReference>
<dbReference type="ProteomicsDB" id="74126">
    <molecule id="Q8TCE6-2"/>
</dbReference>
<dbReference type="Pumba" id="Q8TCE6"/>
<dbReference type="Antibodypedia" id="49417">
    <property type="antibodies" value="46 antibodies from 14 providers"/>
</dbReference>
<dbReference type="DNASU" id="404636"/>
<dbReference type="Ensembl" id="ENST00000361432.3">
    <molecule id="Q8TCE6-1"/>
    <property type="protein sequence ID" value="ENSP00000354688.2"/>
    <property type="gene ID" value="ENSG00000119979.18"/>
</dbReference>
<dbReference type="GeneID" id="404636"/>
<dbReference type="KEGG" id="hsa:404636"/>
<dbReference type="MANE-Select" id="ENST00000361432.3">
    <property type="protein sequence ID" value="ENSP00000354688.2"/>
    <property type="RefSeq nucleotide sequence ID" value="NM_207009.4"/>
    <property type="RefSeq protein sequence ID" value="NP_996892.1"/>
</dbReference>
<dbReference type="UCSC" id="uc001ldw.5">
    <molecule id="Q8TCE6-1"/>
    <property type="organism name" value="human"/>
</dbReference>
<dbReference type="AGR" id="HGNC:31793"/>
<dbReference type="CTD" id="404636"/>
<dbReference type="DisGeNET" id="404636"/>
<dbReference type="GeneCards" id="DENND10"/>
<dbReference type="HGNC" id="HGNC:31793">
    <property type="gene designation" value="DENND10"/>
</dbReference>
<dbReference type="HPA" id="ENSG00000119979">
    <property type="expression patterns" value="Low tissue specificity"/>
</dbReference>
<dbReference type="neXtProt" id="NX_Q8TCE6"/>
<dbReference type="VEuPathDB" id="HostDB:ENSG00000119979"/>
<dbReference type="eggNOG" id="ENOG502QVHR">
    <property type="taxonomic scope" value="Eukaryota"/>
</dbReference>
<dbReference type="GeneTree" id="ENSGT00390000014431"/>
<dbReference type="HOGENOM" id="CLU_050301_0_0_1"/>
<dbReference type="InParanoid" id="Q8TCE6"/>
<dbReference type="OMA" id="HKDIAMF"/>
<dbReference type="OrthoDB" id="66409at2759"/>
<dbReference type="PAN-GO" id="Q8TCE6">
    <property type="GO annotations" value="5 GO annotations based on evolutionary models"/>
</dbReference>
<dbReference type="PhylomeDB" id="Q8TCE6"/>
<dbReference type="TreeFam" id="TF332501"/>
<dbReference type="PathwayCommons" id="Q8TCE6"/>
<dbReference type="SignaLink" id="Q8TCE6"/>
<dbReference type="BioGRID-ORCS" id="404636">
    <property type="hits" value="40 hits in 1154 CRISPR screens"/>
</dbReference>
<dbReference type="ChiTaRS" id="FAM45A">
    <property type="organism name" value="human"/>
</dbReference>
<dbReference type="GenomeRNAi" id="404636"/>
<dbReference type="Pharos" id="Q8TCE6">
    <property type="development level" value="Tdark"/>
</dbReference>
<dbReference type="PRO" id="PR:Q8TCE6"/>
<dbReference type="Proteomes" id="UP000005640">
    <property type="component" value="Chromosome 10"/>
</dbReference>
<dbReference type="RNAct" id="Q8TCE6">
    <property type="molecule type" value="protein"/>
</dbReference>
<dbReference type="Bgee" id="ENSG00000119979">
    <property type="expression patterns" value="Expressed in monocyte and 96 other cell types or tissues"/>
</dbReference>
<dbReference type="ExpressionAtlas" id="Q8TCE6">
    <property type="expression patterns" value="baseline and differential"/>
</dbReference>
<dbReference type="GO" id="GO:0005770">
    <property type="term" value="C:late endosome"/>
    <property type="evidence" value="ECO:0000314"/>
    <property type="project" value="UniProtKB"/>
</dbReference>
<dbReference type="GO" id="GO:0005085">
    <property type="term" value="F:guanyl-nucleotide exchange factor activity"/>
    <property type="evidence" value="ECO:0000314"/>
    <property type="project" value="UniProtKB"/>
</dbReference>
<dbReference type="GO" id="GO:0031267">
    <property type="term" value="F:small GTPase binding"/>
    <property type="evidence" value="ECO:0000353"/>
    <property type="project" value="UniProtKB"/>
</dbReference>
<dbReference type="GO" id="GO:0032509">
    <property type="term" value="P:endosome transport via multivesicular body sorting pathway"/>
    <property type="evidence" value="ECO:0000315"/>
    <property type="project" value="UniProtKB"/>
</dbReference>
<dbReference type="GO" id="GO:0015031">
    <property type="term" value="P:protein transport"/>
    <property type="evidence" value="ECO:0000315"/>
    <property type="project" value="UniProtKB"/>
</dbReference>
<dbReference type="GO" id="GO:2000641">
    <property type="term" value="P:regulation of early endosome to late endosome transport"/>
    <property type="evidence" value="ECO:0000315"/>
    <property type="project" value="UniProtKB"/>
</dbReference>
<dbReference type="InterPro" id="IPR042431">
    <property type="entry name" value="FAM45"/>
</dbReference>
<dbReference type="InterPro" id="IPR037516">
    <property type="entry name" value="Tripartite_DENN"/>
</dbReference>
<dbReference type="PANTHER" id="PTHR28544:SF1">
    <property type="entry name" value="DENN DOMAIN-CONTAINING PROTEIN 10-RELATED"/>
    <property type="match status" value="1"/>
</dbReference>
<dbReference type="PANTHER" id="PTHR28544">
    <property type="entry name" value="PROTEIN FAM45A-RELATED"/>
    <property type="match status" value="1"/>
</dbReference>
<dbReference type="Pfam" id="PF08616">
    <property type="entry name" value="SPA"/>
    <property type="match status" value="1"/>
</dbReference>
<dbReference type="PROSITE" id="PS50211">
    <property type="entry name" value="DENN"/>
    <property type="match status" value="1"/>
</dbReference>
<keyword id="KW-0002">3D-structure</keyword>
<keyword id="KW-0025">Alternative splicing</keyword>
<keyword id="KW-0967">Endosome</keyword>
<keyword id="KW-0344">Guanine-nucleotide releasing factor</keyword>
<keyword id="KW-1267">Proteomics identification</keyword>
<keyword id="KW-1185">Reference proteome</keyword>
<reference key="1">
    <citation type="journal article" date="2004" name="Nat. Genet.">
        <title>Complete sequencing and characterization of 21,243 full-length human cDNAs.</title>
        <authorList>
            <person name="Ota T."/>
            <person name="Suzuki Y."/>
            <person name="Nishikawa T."/>
            <person name="Otsuki T."/>
            <person name="Sugiyama T."/>
            <person name="Irie R."/>
            <person name="Wakamatsu A."/>
            <person name="Hayashi K."/>
            <person name="Sato H."/>
            <person name="Nagai K."/>
            <person name="Kimura K."/>
            <person name="Makita H."/>
            <person name="Sekine M."/>
            <person name="Obayashi M."/>
            <person name="Nishi T."/>
            <person name="Shibahara T."/>
            <person name="Tanaka T."/>
            <person name="Ishii S."/>
            <person name="Yamamoto J."/>
            <person name="Saito K."/>
            <person name="Kawai Y."/>
            <person name="Isono Y."/>
            <person name="Nakamura Y."/>
            <person name="Nagahari K."/>
            <person name="Murakami K."/>
            <person name="Yasuda T."/>
            <person name="Iwayanagi T."/>
            <person name="Wagatsuma M."/>
            <person name="Shiratori A."/>
            <person name="Sudo H."/>
            <person name="Hosoiri T."/>
            <person name="Kaku Y."/>
            <person name="Kodaira H."/>
            <person name="Kondo H."/>
            <person name="Sugawara M."/>
            <person name="Takahashi M."/>
            <person name="Kanda K."/>
            <person name="Yokoi T."/>
            <person name="Furuya T."/>
            <person name="Kikkawa E."/>
            <person name="Omura Y."/>
            <person name="Abe K."/>
            <person name="Kamihara K."/>
            <person name="Katsuta N."/>
            <person name="Sato K."/>
            <person name="Tanikawa M."/>
            <person name="Yamazaki M."/>
            <person name="Ninomiya K."/>
            <person name="Ishibashi T."/>
            <person name="Yamashita H."/>
            <person name="Murakawa K."/>
            <person name="Fujimori K."/>
            <person name="Tanai H."/>
            <person name="Kimata M."/>
            <person name="Watanabe M."/>
            <person name="Hiraoka S."/>
            <person name="Chiba Y."/>
            <person name="Ishida S."/>
            <person name="Ono Y."/>
            <person name="Takiguchi S."/>
            <person name="Watanabe S."/>
            <person name="Yosida M."/>
            <person name="Hotuta T."/>
            <person name="Kusano J."/>
            <person name="Kanehori K."/>
            <person name="Takahashi-Fujii A."/>
            <person name="Hara H."/>
            <person name="Tanase T.-O."/>
            <person name="Nomura Y."/>
            <person name="Togiya S."/>
            <person name="Komai F."/>
            <person name="Hara R."/>
            <person name="Takeuchi K."/>
            <person name="Arita M."/>
            <person name="Imose N."/>
            <person name="Musashino K."/>
            <person name="Yuuki H."/>
            <person name="Oshima A."/>
            <person name="Sasaki N."/>
            <person name="Aotsuka S."/>
            <person name="Yoshikawa Y."/>
            <person name="Matsunawa H."/>
            <person name="Ichihara T."/>
            <person name="Shiohata N."/>
            <person name="Sano S."/>
            <person name="Moriya S."/>
            <person name="Momiyama H."/>
            <person name="Satoh N."/>
            <person name="Takami S."/>
            <person name="Terashima Y."/>
            <person name="Suzuki O."/>
            <person name="Nakagawa S."/>
            <person name="Senoh A."/>
            <person name="Mizoguchi H."/>
            <person name="Goto Y."/>
            <person name="Shimizu F."/>
            <person name="Wakebe H."/>
            <person name="Hishigaki H."/>
            <person name="Watanabe T."/>
            <person name="Sugiyama A."/>
            <person name="Takemoto M."/>
            <person name="Kawakami B."/>
            <person name="Yamazaki M."/>
            <person name="Watanabe K."/>
            <person name="Kumagai A."/>
            <person name="Itakura S."/>
            <person name="Fukuzumi Y."/>
            <person name="Fujimori Y."/>
            <person name="Komiyama M."/>
            <person name="Tashiro H."/>
            <person name="Tanigami A."/>
            <person name="Fujiwara T."/>
            <person name="Ono T."/>
            <person name="Yamada K."/>
            <person name="Fujii Y."/>
            <person name="Ozaki K."/>
            <person name="Hirao M."/>
            <person name="Ohmori Y."/>
            <person name="Kawabata A."/>
            <person name="Hikiji T."/>
            <person name="Kobatake N."/>
            <person name="Inagaki H."/>
            <person name="Ikema Y."/>
            <person name="Okamoto S."/>
            <person name="Okitani R."/>
            <person name="Kawakami T."/>
            <person name="Noguchi S."/>
            <person name="Itoh T."/>
            <person name="Shigeta K."/>
            <person name="Senba T."/>
            <person name="Matsumura K."/>
            <person name="Nakajima Y."/>
            <person name="Mizuno T."/>
            <person name="Morinaga M."/>
            <person name="Sasaki M."/>
            <person name="Togashi T."/>
            <person name="Oyama M."/>
            <person name="Hata H."/>
            <person name="Watanabe M."/>
            <person name="Komatsu T."/>
            <person name="Mizushima-Sugano J."/>
            <person name="Satoh T."/>
            <person name="Shirai Y."/>
            <person name="Takahashi Y."/>
            <person name="Nakagawa K."/>
            <person name="Okumura K."/>
            <person name="Nagase T."/>
            <person name="Nomura N."/>
            <person name="Kikuchi H."/>
            <person name="Masuho Y."/>
            <person name="Yamashita R."/>
            <person name="Nakai K."/>
            <person name="Yada T."/>
            <person name="Nakamura Y."/>
            <person name="Ohara O."/>
            <person name="Isogai T."/>
            <person name="Sugano S."/>
        </authorList>
    </citation>
    <scope>NUCLEOTIDE SEQUENCE [LARGE SCALE MRNA] (ISOFORMS 1 AND 2)</scope>
    <source>
        <tissue>Adipose tissue</tissue>
    </source>
</reference>
<reference key="2">
    <citation type="journal article" date="2004" name="Nature">
        <title>The DNA sequence and comparative analysis of human chromosome 10.</title>
        <authorList>
            <person name="Deloukas P."/>
            <person name="Earthrowl M.E."/>
            <person name="Grafham D.V."/>
            <person name="Rubenfield M."/>
            <person name="French L."/>
            <person name="Steward C.A."/>
            <person name="Sims S.K."/>
            <person name="Jones M.C."/>
            <person name="Searle S."/>
            <person name="Scott C."/>
            <person name="Howe K."/>
            <person name="Hunt S.E."/>
            <person name="Andrews T.D."/>
            <person name="Gilbert J.G.R."/>
            <person name="Swarbreck D."/>
            <person name="Ashurst J.L."/>
            <person name="Taylor A."/>
            <person name="Battles J."/>
            <person name="Bird C.P."/>
            <person name="Ainscough R."/>
            <person name="Almeida J.P."/>
            <person name="Ashwell R.I.S."/>
            <person name="Ambrose K.D."/>
            <person name="Babbage A.K."/>
            <person name="Bagguley C.L."/>
            <person name="Bailey J."/>
            <person name="Banerjee R."/>
            <person name="Bates K."/>
            <person name="Beasley H."/>
            <person name="Bray-Allen S."/>
            <person name="Brown A.J."/>
            <person name="Brown J.Y."/>
            <person name="Burford D.C."/>
            <person name="Burrill W."/>
            <person name="Burton J."/>
            <person name="Cahill P."/>
            <person name="Camire D."/>
            <person name="Carter N.P."/>
            <person name="Chapman J.C."/>
            <person name="Clark S.Y."/>
            <person name="Clarke G."/>
            <person name="Clee C.M."/>
            <person name="Clegg S."/>
            <person name="Corby N."/>
            <person name="Coulson A."/>
            <person name="Dhami P."/>
            <person name="Dutta I."/>
            <person name="Dunn M."/>
            <person name="Faulkner L."/>
            <person name="Frankish A."/>
            <person name="Frankland J.A."/>
            <person name="Garner P."/>
            <person name="Garnett J."/>
            <person name="Gribble S."/>
            <person name="Griffiths C."/>
            <person name="Grocock R."/>
            <person name="Gustafson E."/>
            <person name="Hammond S."/>
            <person name="Harley J.L."/>
            <person name="Hart E."/>
            <person name="Heath P.D."/>
            <person name="Ho T.P."/>
            <person name="Hopkins B."/>
            <person name="Horne J."/>
            <person name="Howden P.J."/>
            <person name="Huckle E."/>
            <person name="Hynds C."/>
            <person name="Johnson C."/>
            <person name="Johnson D."/>
            <person name="Kana A."/>
            <person name="Kay M."/>
            <person name="Kimberley A.M."/>
            <person name="Kershaw J.K."/>
            <person name="Kokkinaki M."/>
            <person name="Laird G.K."/>
            <person name="Lawlor S."/>
            <person name="Lee H.M."/>
            <person name="Leongamornlert D.A."/>
            <person name="Laird G."/>
            <person name="Lloyd C."/>
            <person name="Lloyd D.M."/>
            <person name="Loveland J."/>
            <person name="Lovell J."/>
            <person name="McLaren S."/>
            <person name="McLay K.E."/>
            <person name="McMurray A."/>
            <person name="Mashreghi-Mohammadi M."/>
            <person name="Matthews L."/>
            <person name="Milne S."/>
            <person name="Nickerson T."/>
            <person name="Nguyen M."/>
            <person name="Overton-Larty E."/>
            <person name="Palmer S.A."/>
            <person name="Pearce A.V."/>
            <person name="Peck A.I."/>
            <person name="Pelan S."/>
            <person name="Phillimore B."/>
            <person name="Porter K."/>
            <person name="Rice C.M."/>
            <person name="Rogosin A."/>
            <person name="Ross M.T."/>
            <person name="Sarafidou T."/>
            <person name="Sehra H.K."/>
            <person name="Shownkeen R."/>
            <person name="Skuce C.D."/>
            <person name="Smith M."/>
            <person name="Standring L."/>
            <person name="Sycamore N."/>
            <person name="Tester J."/>
            <person name="Thorpe A."/>
            <person name="Torcasso W."/>
            <person name="Tracey A."/>
            <person name="Tromans A."/>
            <person name="Tsolas J."/>
            <person name="Wall M."/>
            <person name="Walsh J."/>
            <person name="Wang H."/>
            <person name="Weinstock K."/>
            <person name="West A.P."/>
            <person name="Willey D.L."/>
            <person name="Whitehead S.L."/>
            <person name="Wilming L."/>
            <person name="Wray P.W."/>
            <person name="Young L."/>
            <person name="Chen Y."/>
            <person name="Lovering R.C."/>
            <person name="Moschonas N.K."/>
            <person name="Siebert R."/>
            <person name="Fechtel K."/>
            <person name="Bentley D."/>
            <person name="Durbin R.M."/>
            <person name="Hubbard T."/>
            <person name="Doucette-Stamm L."/>
            <person name="Beck S."/>
            <person name="Smith D.R."/>
            <person name="Rogers J."/>
        </authorList>
    </citation>
    <scope>NUCLEOTIDE SEQUENCE [LARGE SCALE GENOMIC DNA]</scope>
</reference>
<reference key="3">
    <citation type="submission" date="2005-09" db="EMBL/GenBank/DDBJ databases">
        <authorList>
            <person name="Mural R.J."/>
            <person name="Istrail S."/>
            <person name="Sutton G.G."/>
            <person name="Florea L."/>
            <person name="Halpern A.L."/>
            <person name="Mobarry C.M."/>
            <person name="Lippert R."/>
            <person name="Walenz B."/>
            <person name="Shatkay H."/>
            <person name="Dew I."/>
            <person name="Miller J.R."/>
            <person name="Flanigan M.J."/>
            <person name="Edwards N.J."/>
            <person name="Bolanos R."/>
            <person name="Fasulo D."/>
            <person name="Halldorsson B.V."/>
            <person name="Hannenhalli S."/>
            <person name="Turner R."/>
            <person name="Yooseph S."/>
            <person name="Lu F."/>
            <person name="Nusskern D.R."/>
            <person name="Shue B.C."/>
            <person name="Zheng X.H."/>
            <person name="Zhong F."/>
            <person name="Delcher A.L."/>
            <person name="Huson D.H."/>
            <person name="Kravitz S.A."/>
            <person name="Mouchard L."/>
            <person name="Reinert K."/>
            <person name="Remington K.A."/>
            <person name="Clark A.G."/>
            <person name="Waterman M.S."/>
            <person name="Eichler E.E."/>
            <person name="Adams M.D."/>
            <person name="Hunkapiller M.W."/>
            <person name="Myers E.W."/>
            <person name="Venter J.C."/>
        </authorList>
    </citation>
    <scope>NUCLEOTIDE SEQUENCE [LARGE SCALE GENOMIC DNA]</scope>
</reference>
<reference key="4">
    <citation type="journal article" date="2004" name="Genome Res.">
        <title>The status, quality, and expansion of the NIH full-length cDNA project: the Mammalian Gene Collection (MGC).</title>
        <authorList>
            <consortium name="The MGC Project Team"/>
        </authorList>
    </citation>
    <scope>NUCLEOTIDE SEQUENCE [LARGE SCALE MRNA] (ISOFORM 1)</scope>
    <source>
        <tissue>Lung</tissue>
    </source>
</reference>
<reference key="5">
    <citation type="journal article" date="2019" name="Biochim. Biophys. Acta">
        <title>DENN domain-containing protein FAM45A regulates the homeostasis of late/multivesicular endosomes.</title>
        <authorList>
            <person name="Zhang J."/>
            <person name="Zhang K."/>
            <person name="Qi L."/>
            <person name="Hu Q."/>
            <person name="Shen Z."/>
            <person name="Liu B."/>
            <person name="Deng J."/>
            <person name="Zhang C."/>
            <person name="Zhang Y."/>
        </authorList>
    </citation>
    <scope>FUNCTION</scope>
    <scope>SUBCELLULAR LOCATION</scope>
    <scope>INTERACTION WITH RAB27A AND RAB27B</scope>
</reference>
<reference key="6">
    <citation type="journal article" date="2023" name="Cell">
        <title>Structure of the endosomal commander complex linked to Ritscher-Schinzel syndrome.</title>
        <authorList>
            <person name="Healy M.D."/>
            <person name="McNally K.E."/>
            <person name="Butkovic R."/>
            <person name="Chilton M."/>
            <person name="Kato K."/>
            <person name="Sacharz J."/>
            <person name="McConville C."/>
            <person name="Moody E.R.R."/>
            <person name="Shaw S."/>
            <person name="Planelles-Herrero V.J."/>
            <person name="Yadav S.K.N."/>
            <person name="Ross J."/>
            <person name="Borucu U."/>
            <person name="Palmer C.S."/>
            <person name="Chen K.E."/>
            <person name="Croll T.I."/>
            <person name="Hall R.J."/>
            <person name="Caruana N.J."/>
            <person name="Ghai R."/>
            <person name="Nguyen T.H.D."/>
            <person name="Heesom K.J."/>
            <person name="Saitoh S."/>
            <person name="Berger I."/>
            <person name="Schaffitzel C."/>
            <person name="Williams T.A."/>
            <person name="Stroud D.A."/>
            <person name="Derivery E."/>
            <person name="Collins B.M."/>
            <person name="Cullen P.J."/>
        </authorList>
    </citation>
    <scope>INTERACTION WITH CCDC22 AND CCDC93</scope>
    <scope>MUTAGENESIS OF LEU-27; MET-123 AND ILE-127</scope>
</reference>
<reference evidence="8" key="7">
    <citation type="journal article" date="2024" name="Nat. Struct. Mol. Biol.">
        <title>Structure and interactions of the endogenous human commander complex.</title>
        <authorList>
            <person name="Laulumaa S."/>
            <person name="Kumpula E.P."/>
            <person name="Huiskonen J.T."/>
            <person name="Varjosalo M."/>
        </authorList>
    </citation>
    <scope>STRUCTURE BY ELECTRON MICROSCOPY (6.50 ANGSTROMS) IN COMPLEXES WITH THE RETRIEVER COMPLEX; CCDC22 AND CCDC93</scope>
    <scope>FUNCTION</scope>
    <scope>SUBUNIT</scope>
    <scope>INTERACTION WITH CCDC22 AND CCDC93</scope>
</reference>